<evidence type="ECO:0000255" key="1">
    <source>
        <dbReference type="PROSITE-ProRule" id="PRU00605"/>
    </source>
</evidence>
<evidence type="ECO:0000305" key="2"/>
<organism>
    <name type="scientific">Candida glabrata (strain ATCC 2001 / BCRC 20586 / JCM 3761 / NBRC 0622 / NRRL Y-65 / CBS 138)</name>
    <name type="common">Yeast</name>
    <name type="synonym">Nakaseomyces glabratus</name>
    <dbReference type="NCBI Taxonomy" id="284593"/>
    <lineage>
        <taxon>Eukaryota</taxon>
        <taxon>Fungi</taxon>
        <taxon>Dikarya</taxon>
        <taxon>Ascomycota</taxon>
        <taxon>Saccharomycotina</taxon>
        <taxon>Saccharomycetes</taxon>
        <taxon>Saccharomycetales</taxon>
        <taxon>Saccharomycetaceae</taxon>
        <taxon>Nakaseomyces</taxon>
    </lineage>
</organism>
<gene>
    <name type="primary">URA7</name>
    <name type="ordered locus">CAGL0F04433g</name>
</gene>
<proteinExistence type="inferred from homology"/>
<accession>Q6FUD0</accession>
<dbReference type="EC" id="6.3.4.2"/>
<dbReference type="EMBL" id="CR380952">
    <property type="protein sequence ID" value="CAG59088.1"/>
    <property type="molecule type" value="Genomic_DNA"/>
</dbReference>
<dbReference type="RefSeq" id="XP_446164.1">
    <property type="nucleotide sequence ID" value="XM_446164.1"/>
</dbReference>
<dbReference type="SMR" id="Q6FUD0"/>
<dbReference type="FunCoup" id="Q6FUD0">
    <property type="interactions" value="946"/>
</dbReference>
<dbReference type="STRING" id="284593.Q6FUD0"/>
<dbReference type="EnsemblFungi" id="CAGL0F04433g-T">
    <property type="protein sequence ID" value="CAGL0F04433g-T-p1"/>
    <property type="gene ID" value="CAGL0F04433g"/>
</dbReference>
<dbReference type="GeneID" id="2887710"/>
<dbReference type="KEGG" id="cgr:2887710"/>
<dbReference type="CGD" id="CAL0131306">
    <property type="gene designation" value="URA7"/>
</dbReference>
<dbReference type="VEuPathDB" id="FungiDB:B1J91_F04433g"/>
<dbReference type="VEuPathDB" id="FungiDB:CAGL0F04433g"/>
<dbReference type="eggNOG" id="KOG2387">
    <property type="taxonomic scope" value="Eukaryota"/>
</dbReference>
<dbReference type="HOGENOM" id="CLU_011675_5_0_1"/>
<dbReference type="InParanoid" id="Q6FUD0"/>
<dbReference type="OMA" id="EFNNAYR"/>
<dbReference type="UniPathway" id="UPA00159">
    <property type="reaction ID" value="UER00277"/>
</dbReference>
<dbReference type="Proteomes" id="UP000002428">
    <property type="component" value="Chromosome F"/>
</dbReference>
<dbReference type="GO" id="GO:0097268">
    <property type="term" value="C:cytoophidium"/>
    <property type="evidence" value="ECO:0007669"/>
    <property type="project" value="TreeGrafter"/>
</dbReference>
<dbReference type="GO" id="GO:0005737">
    <property type="term" value="C:cytoplasm"/>
    <property type="evidence" value="ECO:0007669"/>
    <property type="project" value="TreeGrafter"/>
</dbReference>
<dbReference type="GO" id="GO:0005524">
    <property type="term" value="F:ATP binding"/>
    <property type="evidence" value="ECO:0007669"/>
    <property type="project" value="UniProtKB-KW"/>
</dbReference>
<dbReference type="GO" id="GO:0003883">
    <property type="term" value="F:CTP synthase activity"/>
    <property type="evidence" value="ECO:0007669"/>
    <property type="project" value="UniProtKB-EC"/>
</dbReference>
<dbReference type="GO" id="GO:0042802">
    <property type="term" value="F:identical protein binding"/>
    <property type="evidence" value="ECO:0007669"/>
    <property type="project" value="TreeGrafter"/>
</dbReference>
<dbReference type="GO" id="GO:0044210">
    <property type="term" value="P:'de novo' CTP biosynthetic process"/>
    <property type="evidence" value="ECO:0007669"/>
    <property type="project" value="UniProtKB-UniPathway"/>
</dbReference>
<dbReference type="GO" id="GO:0019856">
    <property type="term" value="P:pyrimidine nucleobase biosynthetic process"/>
    <property type="evidence" value="ECO:0007669"/>
    <property type="project" value="TreeGrafter"/>
</dbReference>
<dbReference type="CDD" id="cd03113">
    <property type="entry name" value="CTPS_N"/>
    <property type="match status" value="1"/>
</dbReference>
<dbReference type="CDD" id="cd01746">
    <property type="entry name" value="GATase1_CTP_Synthase"/>
    <property type="match status" value="1"/>
</dbReference>
<dbReference type="FunFam" id="3.40.50.300:FF:000207">
    <property type="entry name" value="CTP synthase"/>
    <property type="match status" value="1"/>
</dbReference>
<dbReference type="FunFam" id="3.40.50.880:FF:000005">
    <property type="entry name" value="CTP synthase"/>
    <property type="match status" value="1"/>
</dbReference>
<dbReference type="Gene3D" id="3.40.50.880">
    <property type="match status" value="1"/>
</dbReference>
<dbReference type="Gene3D" id="3.40.50.300">
    <property type="entry name" value="P-loop containing nucleotide triphosphate hydrolases"/>
    <property type="match status" value="1"/>
</dbReference>
<dbReference type="InterPro" id="IPR029062">
    <property type="entry name" value="Class_I_gatase-like"/>
</dbReference>
<dbReference type="InterPro" id="IPR004468">
    <property type="entry name" value="CTP_synthase"/>
</dbReference>
<dbReference type="InterPro" id="IPR017456">
    <property type="entry name" value="CTP_synthase_N"/>
</dbReference>
<dbReference type="InterPro" id="IPR017926">
    <property type="entry name" value="GATASE"/>
</dbReference>
<dbReference type="InterPro" id="IPR033828">
    <property type="entry name" value="GATase1_CTP_Synthase"/>
</dbReference>
<dbReference type="InterPro" id="IPR027417">
    <property type="entry name" value="P-loop_NTPase"/>
</dbReference>
<dbReference type="NCBIfam" id="NF003792">
    <property type="entry name" value="PRK05380.1"/>
    <property type="match status" value="1"/>
</dbReference>
<dbReference type="NCBIfam" id="TIGR00337">
    <property type="entry name" value="PyrG"/>
    <property type="match status" value="1"/>
</dbReference>
<dbReference type="PANTHER" id="PTHR11550">
    <property type="entry name" value="CTP SYNTHASE"/>
    <property type="match status" value="1"/>
</dbReference>
<dbReference type="PANTHER" id="PTHR11550:SF0">
    <property type="entry name" value="CTP SYNTHASE-RELATED"/>
    <property type="match status" value="1"/>
</dbReference>
<dbReference type="Pfam" id="PF06418">
    <property type="entry name" value="CTP_synth_N"/>
    <property type="match status" value="1"/>
</dbReference>
<dbReference type="Pfam" id="PF00117">
    <property type="entry name" value="GATase"/>
    <property type="match status" value="1"/>
</dbReference>
<dbReference type="SUPFAM" id="SSF52317">
    <property type="entry name" value="Class I glutamine amidotransferase-like"/>
    <property type="match status" value="1"/>
</dbReference>
<dbReference type="SUPFAM" id="SSF52540">
    <property type="entry name" value="P-loop containing nucleoside triphosphate hydrolases"/>
    <property type="match status" value="1"/>
</dbReference>
<dbReference type="PROSITE" id="PS51273">
    <property type="entry name" value="GATASE_TYPE_1"/>
    <property type="match status" value="1"/>
</dbReference>
<comment type="function">
    <text>Catalyzes the ATP-dependent amination of UTP to CTP with either L-glutamine or ammonia as the source of nitrogen.</text>
</comment>
<comment type="catalytic activity">
    <reaction>
        <text>UTP + L-glutamine + ATP + H2O = CTP + L-glutamate + ADP + phosphate + 2 H(+)</text>
        <dbReference type="Rhea" id="RHEA:26426"/>
        <dbReference type="ChEBI" id="CHEBI:15377"/>
        <dbReference type="ChEBI" id="CHEBI:15378"/>
        <dbReference type="ChEBI" id="CHEBI:29985"/>
        <dbReference type="ChEBI" id="CHEBI:30616"/>
        <dbReference type="ChEBI" id="CHEBI:37563"/>
        <dbReference type="ChEBI" id="CHEBI:43474"/>
        <dbReference type="ChEBI" id="CHEBI:46398"/>
        <dbReference type="ChEBI" id="CHEBI:58359"/>
        <dbReference type="ChEBI" id="CHEBI:456216"/>
        <dbReference type="EC" id="6.3.4.2"/>
    </reaction>
</comment>
<comment type="pathway">
    <text>Pyrimidine metabolism; CTP biosynthesis via de novo pathway; CTP from UDP: step 2/2.</text>
</comment>
<comment type="similarity">
    <text evidence="2">Belongs to the CTP synthase family.</text>
</comment>
<name>PYRG_CANGA</name>
<sequence>MKYVVVSGGVISGIGKGVLASSTGMLLKTLGLKVTSIKIDPYMNIDAGTMSPLEHGECFVLNDGGETDLDLGNYERYLNVTLTKDHNITTGKIYSHVIAKERKGDYLGKTVQIVPHLTNAIQEWIERVSRIPVDNTGMEPDVCIIELGGTVGDIESAPFVEALRQFQFRVGKENFALIHVSLVPVIHGEQKTKPTQAAIKDLRSLGLVPDMIACRCSETLEKGVIEKIAMFCHVGADQVVNVHDVNSTYHVPLLLLEQKMINYLHQRLQLQEITLSSEDIQRGENLLSKWKSMTGNFDSSMETVKIALVGKYTNLKDSYLSVIKALEHSSMKCRRKLEIMWVEATDLEPETQDTEKAKFHEAWNKVSTADGILVPGGFGSRGTEGMMLASRWARENHIPFLGVCLGLQIATIEFARNVLGVKEGNSAEFFPELDESNQVVVFMPEIDKETMGGSMRLGLRPTYFQQGTEWCAIKKLYGSAESVEERHRHRYEINPNFIERLEEHGLMFVGRDETNKRCEIFEMKDHPFFVATQYHPEYTSKVLDPSKPFLGLVAASSGILDDVIAGKYEFNGDGKSDF</sequence>
<protein>
    <recommendedName>
        <fullName>CTP synthase</fullName>
        <ecNumber>6.3.4.2</ecNumber>
    </recommendedName>
    <alternativeName>
        <fullName>CTP synthetase</fullName>
    </alternativeName>
    <alternativeName>
        <fullName>UTP--ammonia ligase</fullName>
    </alternativeName>
</protein>
<reference key="1">
    <citation type="journal article" date="2004" name="Nature">
        <title>Genome evolution in yeasts.</title>
        <authorList>
            <person name="Dujon B."/>
            <person name="Sherman D."/>
            <person name="Fischer G."/>
            <person name="Durrens P."/>
            <person name="Casaregola S."/>
            <person name="Lafontaine I."/>
            <person name="de Montigny J."/>
            <person name="Marck C."/>
            <person name="Neuveglise C."/>
            <person name="Talla E."/>
            <person name="Goffard N."/>
            <person name="Frangeul L."/>
            <person name="Aigle M."/>
            <person name="Anthouard V."/>
            <person name="Babour A."/>
            <person name="Barbe V."/>
            <person name="Barnay S."/>
            <person name="Blanchin S."/>
            <person name="Beckerich J.-M."/>
            <person name="Beyne E."/>
            <person name="Bleykasten C."/>
            <person name="Boisrame A."/>
            <person name="Boyer J."/>
            <person name="Cattolico L."/>
            <person name="Confanioleri F."/>
            <person name="de Daruvar A."/>
            <person name="Despons L."/>
            <person name="Fabre E."/>
            <person name="Fairhead C."/>
            <person name="Ferry-Dumazet H."/>
            <person name="Groppi A."/>
            <person name="Hantraye F."/>
            <person name="Hennequin C."/>
            <person name="Jauniaux N."/>
            <person name="Joyet P."/>
            <person name="Kachouri R."/>
            <person name="Kerrest A."/>
            <person name="Koszul R."/>
            <person name="Lemaire M."/>
            <person name="Lesur I."/>
            <person name="Ma L."/>
            <person name="Muller H."/>
            <person name="Nicaud J.-M."/>
            <person name="Nikolski M."/>
            <person name="Oztas S."/>
            <person name="Ozier-Kalogeropoulos O."/>
            <person name="Pellenz S."/>
            <person name="Potier S."/>
            <person name="Richard G.-F."/>
            <person name="Straub M.-L."/>
            <person name="Suleau A."/>
            <person name="Swennen D."/>
            <person name="Tekaia F."/>
            <person name="Wesolowski-Louvel M."/>
            <person name="Westhof E."/>
            <person name="Wirth B."/>
            <person name="Zeniou-Meyer M."/>
            <person name="Zivanovic Y."/>
            <person name="Bolotin-Fukuhara M."/>
            <person name="Thierry A."/>
            <person name="Bouchier C."/>
            <person name="Caudron B."/>
            <person name="Scarpelli C."/>
            <person name="Gaillardin C."/>
            <person name="Weissenbach J."/>
            <person name="Wincker P."/>
            <person name="Souciet J.-L."/>
        </authorList>
    </citation>
    <scope>NUCLEOTIDE SEQUENCE [LARGE SCALE GENOMIC DNA]</scope>
    <source>
        <strain>ATCC 2001 / BCRC 20586 / JCM 3761 / NBRC 0622 / NRRL Y-65 / CBS 138</strain>
    </source>
</reference>
<feature type="chain" id="PRO_0000138279" description="CTP synthase">
    <location>
        <begin position="1"/>
        <end position="578"/>
    </location>
</feature>
<feature type="domain" description="Glutamine amidotransferase type-1" evidence="1">
    <location>
        <begin position="305"/>
        <end position="559"/>
    </location>
</feature>
<feature type="active site" description="For GATase activity" evidence="1">
    <location>
        <position position="404"/>
    </location>
</feature>
<feature type="active site" description="For GATase activity" evidence="1">
    <location>
        <position position="535"/>
    </location>
</feature>
<feature type="active site" description="For GATase activity" evidence="1">
    <location>
        <position position="537"/>
    </location>
</feature>
<keyword id="KW-0067">ATP-binding</keyword>
<keyword id="KW-0315">Glutamine amidotransferase</keyword>
<keyword id="KW-0436">Ligase</keyword>
<keyword id="KW-0547">Nucleotide-binding</keyword>
<keyword id="KW-0665">Pyrimidine biosynthesis</keyword>
<keyword id="KW-1185">Reference proteome</keyword>